<dbReference type="EMBL" id="CP000524">
    <property type="protein sequence ID" value="ABM45284.1"/>
    <property type="molecule type" value="Genomic_DNA"/>
</dbReference>
<dbReference type="RefSeq" id="WP_005766189.1">
    <property type="nucleotide sequence ID" value="NC_008783.1"/>
</dbReference>
<dbReference type="SMR" id="A1URL2"/>
<dbReference type="STRING" id="360095.BARBAKC583_0292"/>
<dbReference type="GeneID" id="4685160"/>
<dbReference type="KEGG" id="bbk:BARBAKC583_0292"/>
<dbReference type="PATRIC" id="fig|360095.6.peg.280"/>
<dbReference type="eggNOG" id="COG1970">
    <property type="taxonomic scope" value="Bacteria"/>
</dbReference>
<dbReference type="HOGENOM" id="CLU_095787_0_1_5"/>
<dbReference type="OrthoDB" id="9810350at2"/>
<dbReference type="Proteomes" id="UP000000643">
    <property type="component" value="Chromosome"/>
</dbReference>
<dbReference type="GO" id="GO:0005886">
    <property type="term" value="C:plasma membrane"/>
    <property type="evidence" value="ECO:0007669"/>
    <property type="project" value="UniProtKB-SubCell"/>
</dbReference>
<dbReference type="GO" id="GO:0008381">
    <property type="term" value="F:mechanosensitive monoatomic ion channel activity"/>
    <property type="evidence" value="ECO:0007669"/>
    <property type="project" value="UniProtKB-UniRule"/>
</dbReference>
<dbReference type="Gene3D" id="1.10.1200.120">
    <property type="entry name" value="Large-conductance mechanosensitive channel, MscL, domain 1"/>
    <property type="match status" value="1"/>
</dbReference>
<dbReference type="HAMAP" id="MF_00115">
    <property type="entry name" value="MscL"/>
    <property type="match status" value="1"/>
</dbReference>
<dbReference type="InterPro" id="IPR019823">
    <property type="entry name" value="Mechanosensitive_channel_CS"/>
</dbReference>
<dbReference type="InterPro" id="IPR001185">
    <property type="entry name" value="MS_channel"/>
</dbReference>
<dbReference type="InterPro" id="IPR037673">
    <property type="entry name" value="MSC/AndL"/>
</dbReference>
<dbReference type="InterPro" id="IPR036019">
    <property type="entry name" value="MscL_channel"/>
</dbReference>
<dbReference type="NCBIfam" id="TIGR00220">
    <property type="entry name" value="mscL"/>
    <property type="match status" value="1"/>
</dbReference>
<dbReference type="NCBIfam" id="NF001843">
    <property type="entry name" value="PRK00567.1-4"/>
    <property type="match status" value="1"/>
</dbReference>
<dbReference type="NCBIfam" id="NF010557">
    <property type="entry name" value="PRK13952.1"/>
    <property type="match status" value="1"/>
</dbReference>
<dbReference type="PANTHER" id="PTHR30266:SF2">
    <property type="entry name" value="LARGE-CONDUCTANCE MECHANOSENSITIVE CHANNEL"/>
    <property type="match status" value="1"/>
</dbReference>
<dbReference type="PANTHER" id="PTHR30266">
    <property type="entry name" value="MECHANOSENSITIVE CHANNEL MSCL"/>
    <property type="match status" value="1"/>
</dbReference>
<dbReference type="Pfam" id="PF01741">
    <property type="entry name" value="MscL"/>
    <property type="match status" value="1"/>
</dbReference>
<dbReference type="PRINTS" id="PR01264">
    <property type="entry name" value="MECHCHANNEL"/>
</dbReference>
<dbReference type="SUPFAM" id="SSF81330">
    <property type="entry name" value="Gated mechanosensitive channel"/>
    <property type="match status" value="1"/>
</dbReference>
<dbReference type="PROSITE" id="PS01327">
    <property type="entry name" value="MSCL"/>
    <property type="match status" value="1"/>
</dbReference>
<feature type="chain" id="PRO_1000015354" description="Large-conductance mechanosensitive channel">
    <location>
        <begin position="1"/>
        <end position="138"/>
    </location>
</feature>
<feature type="transmembrane region" description="Helical" evidence="1">
    <location>
        <begin position="15"/>
        <end position="35"/>
    </location>
</feature>
<feature type="transmembrane region" description="Helical" evidence="1">
    <location>
        <begin position="38"/>
        <end position="58"/>
    </location>
</feature>
<feature type="transmembrane region" description="Helical" evidence="1">
    <location>
        <begin position="80"/>
        <end position="100"/>
    </location>
</feature>
<sequence>MLKEFKQFALKGNMVDLAVGVIIGSAFGGLVNSVVNDIFMPIIGLITGGIDFSNMFIQLAGDKKATLLAAKEAGATLSYGNFITLLINFLIISWILFFLVKGMNKMTQKQEEVEKPKEMSPEGKLLTEIRDLLAAQKE</sequence>
<comment type="function">
    <text evidence="1">Channel that opens in response to stretch forces in the membrane lipid bilayer. May participate in the regulation of osmotic pressure changes within the cell.</text>
</comment>
<comment type="subunit">
    <text evidence="1">Homopentamer.</text>
</comment>
<comment type="subcellular location">
    <subcellularLocation>
        <location evidence="1">Cell inner membrane</location>
        <topology evidence="1">Multi-pass membrane protein</topology>
    </subcellularLocation>
</comment>
<comment type="similarity">
    <text evidence="1">Belongs to the MscL family.</text>
</comment>
<organism>
    <name type="scientific">Bartonella bacilliformis (strain ATCC 35685 / KC583 / Herrer 020/F12,63)</name>
    <dbReference type="NCBI Taxonomy" id="360095"/>
    <lineage>
        <taxon>Bacteria</taxon>
        <taxon>Pseudomonadati</taxon>
        <taxon>Pseudomonadota</taxon>
        <taxon>Alphaproteobacteria</taxon>
        <taxon>Hyphomicrobiales</taxon>
        <taxon>Bartonellaceae</taxon>
        <taxon>Bartonella</taxon>
    </lineage>
</organism>
<accession>A1URL2</accession>
<name>MSCL_BARBK</name>
<reference key="1">
    <citation type="submission" date="2006-12" db="EMBL/GenBank/DDBJ databases">
        <authorList>
            <person name="Hendrix L."/>
            <person name="Mohamoud Y."/>
            <person name="Radune D."/>
            <person name="Shvartsbeyn A."/>
            <person name="Daugherty S."/>
            <person name="Dodson R."/>
            <person name="Durkin A.S."/>
            <person name="Harkins D."/>
            <person name="Huot H."/>
            <person name="Kothari S.P."/>
            <person name="Madupu R."/>
            <person name="Li J."/>
            <person name="Nelson W.C."/>
            <person name="Shrivastava S."/>
            <person name="Giglio M.G."/>
            <person name="Haft D."/>
            <person name="Selengut J."/>
            <person name="Fraser-Ligget C."/>
            <person name="Seshadri R."/>
        </authorList>
    </citation>
    <scope>NUCLEOTIDE SEQUENCE [LARGE SCALE GENOMIC DNA]</scope>
    <source>
        <strain>ATCC 35685 / KC583 / Herrer 020/F12,63</strain>
    </source>
</reference>
<evidence type="ECO:0000255" key="1">
    <source>
        <dbReference type="HAMAP-Rule" id="MF_00115"/>
    </source>
</evidence>
<keyword id="KW-0997">Cell inner membrane</keyword>
<keyword id="KW-1003">Cell membrane</keyword>
<keyword id="KW-0407">Ion channel</keyword>
<keyword id="KW-0406">Ion transport</keyword>
<keyword id="KW-0472">Membrane</keyword>
<keyword id="KW-0812">Transmembrane</keyword>
<keyword id="KW-1133">Transmembrane helix</keyword>
<keyword id="KW-0813">Transport</keyword>
<gene>
    <name evidence="1" type="primary">mscL</name>
    <name type="ordered locus">BARBAKC583_0292</name>
</gene>
<protein>
    <recommendedName>
        <fullName evidence="1">Large-conductance mechanosensitive channel</fullName>
    </recommendedName>
</protein>
<proteinExistence type="inferred from homology"/>